<gene>
    <name type="ordered locus">MIMI_R458</name>
</gene>
<proteinExistence type="inferred from homology"/>
<keyword id="KW-0067">ATP-binding</keyword>
<keyword id="KW-0347">Helicase</keyword>
<keyword id="KW-0378">Hydrolase</keyword>
<keyword id="KW-0547">Nucleotide-binding</keyword>
<keyword id="KW-1185">Reference proteome</keyword>
<feature type="chain" id="PRO_0000054969" description="Putative ATP-dependent RNA helicase R458">
    <location>
        <begin position="1"/>
        <end position="524"/>
    </location>
</feature>
<feature type="domain" description="Helicase ATP-binding" evidence="1">
    <location>
        <begin position="125"/>
        <end position="338"/>
    </location>
</feature>
<feature type="domain" description="Helicase C-terminal" evidence="2">
    <location>
        <begin position="373"/>
        <end position="524"/>
    </location>
</feature>
<feature type="short sequence motif" description="DEFD box">
    <location>
        <begin position="268"/>
        <end position="271"/>
    </location>
</feature>
<feature type="binding site" evidence="1">
    <location>
        <begin position="138"/>
        <end position="145"/>
    </location>
    <ligand>
        <name>ATP</name>
        <dbReference type="ChEBI" id="CHEBI:30616"/>
    </ligand>
</feature>
<accession>Q5UQD1</accession>
<evidence type="ECO:0000255" key="1">
    <source>
        <dbReference type="PROSITE-ProRule" id="PRU00541"/>
    </source>
</evidence>
<evidence type="ECO:0000255" key="2">
    <source>
        <dbReference type="PROSITE-ProRule" id="PRU00542"/>
    </source>
</evidence>
<evidence type="ECO:0000305" key="3"/>
<name>YR458_MIMIV</name>
<reference key="1">
    <citation type="journal article" date="2004" name="Science">
        <title>The 1.2-megabase genome sequence of Mimivirus.</title>
        <authorList>
            <person name="Raoult D."/>
            <person name="Audic S."/>
            <person name="Robert C."/>
            <person name="Abergel C."/>
            <person name="Renesto P."/>
            <person name="Ogata H."/>
            <person name="La Scola B."/>
            <person name="Susan M."/>
            <person name="Claverie J.-M."/>
        </authorList>
    </citation>
    <scope>NUCLEOTIDE SEQUENCE [LARGE SCALE GENOMIC DNA]</scope>
    <source>
        <strain>Rowbotham-Bradford</strain>
    </source>
</reference>
<sequence length="524" mass="59563">MNSDQENINSYNFESIKIGDYKCNVNRIPGDNLYLLSNFNDAEPKYDDKNGVHLEFNYKKIGESKTMRLNDGATSTVLIEGARNMNANEYFPKFVEKKKSFAEHLIRKTFAKGYESPSEIQALVVPELIQRKDTLIQFKSGTGKTHAFLFGCLWGFDPDDDVLQYIFITSSHEVATQIYEQAVFLLPETAKIALCIGQKKSPNSFGNSGFKTPIGTSSLNHKPKSIKEEREEIRQAQIIICTMGRFYDILCNKGWITTTRYLKAICVDEFDNIVASKTKQRSSTVMNTEDQMAEIIQKIESEAPKNSENGAQRVFFSATVSPYAIKIANSYFRKYSPIIGEPFIVLLDSEDYTLEGIRQYYVQCSNYFEKKEIILDLLKQCRIAQAIIFANRIETANEIKKLLDEQEVPISSAVFHGDLPAVTRKNIHKDFVENKIRLLISTDLTSRGLDVQGINVVFNFDMPDTLETYIHRVGRSGRYGRKGVSISLILVNQNKNEMEKVEQIDNCSKQSKMSQLPGDLSTLL</sequence>
<organism>
    <name type="scientific">Acanthamoeba polyphaga mimivirus</name>
    <name type="common">APMV</name>
    <dbReference type="NCBI Taxonomy" id="212035"/>
    <lineage>
        <taxon>Viruses</taxon>
        <taxon>Varidnaviria</taxon>
        <taxon>Bamfordvirae</taxon>
        <taxon>Nucleocytoviricota</taxon>
        <taxon>Megaviricetes</taxon>
        <taxon>Imitervirales</taxon>
        <taxon>Mimiviridae</taxon>
        <taxon>Megamimivirinae</taxon>
        <taxon>Mimivirus</taxon>
        <taxon>Mimivirus bradfordmassiliense</taxon>
    </lineage>
</organism>
<protein>
    <recommendedName>
        <fullName>Putative ATP-dependent RNA helicase R458</fullName>
        <ecNumber>3.6.4.13</ecNumber>
    </recommendedName>
</protein>
<dbReference type="EC" id="3.6.4.13"/>
<dbReference type="EMBL" id="AY653733">
    <property type="protein sequence ID" value="AAV50724.1"/>
    <property type="molecule type" value="Genomic_DNA"/>
</dbReference>
<dbReference type="SMR" id="Q5UQD1"/>
<dbReference type="KEGG" id="vg:9925083"/>
<dbReference type="OrthoDB" id="4158at10239"/>
<dbReference type="Proteomes" id="UP000001134">
    <property type="component" value="Genome"/>
</dbReference>
<dbReference type="GO" id="GO:0005524">
    <property type="term" value="F:ATP binding"/>
    <property type="evidence" value="ECO:0007669"/>
    <property type="project" value="UniProtKB-KW"/>
</dbReference>
<dbReference type="GO" id="GO:0016887">
    <property type="term" value="F:ATP hydrolysis activity"/>
    <property type="evidence" value="ECO:0007669"/>
    <property type="project" value="RHEA"/>
</dbReference>
<dbReference type="GO" id="GO:0003676">
    <property type="term" value="F:nucleic acid binding"/>
    <property type="evidence" value="ECO:0007669"/>
    <property type="project" value="InterPro"/>
</dbReference>
<dbReference type="GO" id="GO:0003724">
    <property type="term" value="F:RNA helicase activity"/>
    <property type="evidence" value="ECO:0007669"/>
    <property type="project" value="UniProtKB-EC"/>
</dbReference>
<dbReference type="CDD" id="cd18787">
    <property type="entry name" value="SF2_C_DEAD"/>
    <property type="match status" value="1"/>
</dbReference>
<dbReference type="Gene3D" id="3.40.50.300">
    <property type="entry name" value="P-loop containing nucleotide triphosphate hydrolases"/>
    <property type="match status" value="2"/>
</dbReference>
<dbReference type="InterPro" id="IPR011545">
    <property type="entry name" value="DEAD/DEAH_box_helicase_dom"/>
</dbReference>
<dbReference type="InterPro" id="IPR014001">
    <property type="entry name" value="Helicase_ATP-bd"/>
</dbReference>
<dbReference type="InterPro" id="IPR001650">
    <property type="entry name" value="Helicase_C-like"/>
</dbReference>
<dbReference type="InterPro" id="IPR027417">
    <property type="entry name" value="P-loop_NTPase"/>
</dbReference>
<dbReference type="PANTHER" id="PTHR24031">
    <property type="entry name" value="RNA HELICASE"/>
    <property type="match status" value="1"/>
</dbReference>
<dbReference type="Pfam" id="PF00270">
    <property type="entry name" value="DEAD"/>
    <property type="match status" value="1"/>
</dbReference>
<dbReference type="Pfam" id="PF00271">
    <property type="entry name" value="Helicase_C"/>
    <property type="match status" value="1"/>
</dbReference>
<dbReference type="SMART" id="SM00487">
    <property type="entry name" value="DEXDc"/>
    <property type="match status" value="1"/>
</dbReference>
<dbReference type="SMART" id="SM00490">
    <property type="entry name" value="HELICc"/>
    <property type="match status" value="1"/>
</dbReference>
<dbReference type="SUPFAM" id="SSF52540">
    <property type="entry name" value="P-loop containing nucleoside triphosphate hydrolases"/>
    <property type="match status" value="1"/>
</dbReference>
<dbReference type="PROSITE" id="PS51192">
    <property type="entry name" value="HELICASE_ATP_BIND_1"/>
    <property type="match status" value="1"/>
</dbReference>
<dbReference type="PROSITE" id="PS51194">
    <property type="entry name" value="HELICASE_CTER"/>
    <property type="match status" value="1"/>
</dbReference>
<organismHost>
    <name type="scientific">Acanthamoeba polyphaga</name>
    <name type="common">Amoeba</name>
    <dbReference type="NCBI Taxonomy" id="5757"/>
</organismHost>
<comment type="function">
    <text>Putative ATP-dependent RNA helicase.</text>
</comment>
<comment type="catalytic activity">
    <reaction>
        <text>ATP + H2O = ADP + phosphate + H(+)</text>
        <dbReference type="Rhea" id="RHEA:13065"/>
        <dbReference type="ChEBI" id="CHEBI:15377"/>
        <dbReference type="ChEBI" id="CHEBI:15378"/>
        <dbReference type="ChEBI" id="CHEBI:30616"/>
        <dbReference type="ChEBI" id="CHEBI:43474"/>
        <dbReference type="ChEBI" id="CHEBI:456216"/>
        <dbReference type="EC" id="3.6.4.13"/>
    </reaction>
</comment>
<comment type="similarity">
    <text evidence="3">Belongs to the DEAD box helicase family. eIF4A subfamily.</text>
</comment>